<comment type="function">
    <text evidence="2 3">Active efflux pump that plays an important role in chloramphenicol resistance (PubMed:31054279). Overexpression causes pyrazinamide resistance (PubMed:28584158).</text>
</comment>
<comment type="activity regulation">
    <text evidence="2 3">Inhibited by the drug efflux pump inhibitors verapamil, resperine, piperine, chlorpromazine and carbonyl cyanide m-chlorophenylhydrazone (CCCP).</text>
</comment>
<comment type="subcellular location">
    <subcellularLocation>
        <location evidence="4">Cell membrane</location>
        <topology evidence="1">Multi-pass membrane protein</topology>
    </subcellularLocation>
</comment>
<comment type="induction">
    <text evidence="3">Expression is negatively regulated by the transcriptional repressor Rv1353c.</text>
</comment>
<comment type="similarity">
    <text evidence="4">Belongs to the major facilitator superfamily.</text>
</comment>
<accession>P9WJX7</accession>
<accession>L0T4M5</accession>
<accession>O07435</accession>
<accession>Q7DAA8</accession>
<organism>
    <name type="scientific">Mycobacterium tuberculosis (strain ATCC 25618 / H37Rv)</name>
    <dbReference type="NCBI Taxonomy" id="83332"/>
    <lineage>
        <taxon>Bacteria</taxon>
        <taxon>Bacillati</taxon>
        <taxon>Actinomycetota</taxon>
        <taxon>Actinomycetes</taxon>
        <taxon>Mycobacteriales</taxon>
        <taxon>Mycobacteriaceae</taxon>
        <taxon>Mycobacterium</taxon>
        <taxon>Mycobacterium tuberculosis complex</taxon>
    </lineage>
</organism>
<evidence type="ECO:0000255" key="1"/>
<evidence type="ECO:0000269" key="2">
    <source>
    </source>
</evidence>
<evidence type="ECO:0000269" key="3">
    <source>
    </source>
</evidence>
<evidence type="ECO:0000305" key="4"/>
<feature type="chain" id="PRO_0000390681" description="Chloramphenicol efflux pump Rv0191">
    <location>
        <begin position="1"/>
        <end position="413"/>
    </location>
</feature>
<feature type="transmembrane region" description="Helical" evidence="1">
    <location>
        <begin position="23"/>
        <end position="43"/>
    </location>
</feature>
<feature type="transmembrane region" description="Helical" evidence="1">
    <location>
        <begin position="55"/>
        <end position="75"/>
    </location>
</feature>
<feature type="transmembrane region" description="Helical" evidence="1">
    <location>
        <begin position="89"/>
        <end position="109"/>
    </location>
</feature>
<feature type="transmembrane region" description="Helical" evidence="1">
    <location>
        <begin position="110"/>
        <end position="130"/>
    </location>
</feature>
<feature type="transmembrane region" description="Helical" evidence="1">
    <location>
        <begin position="150"/>
        <end position="170"/>
    </location>
</feature>
<feature type="transmembrane region" description="Helical" evidence="1">
    <location>
        <begin position="176"/>
        <end position="196"/>
    </location>
</feature>
<feature type="transmembrane region" description="Helical" evidence="1">
    <location>
        <begin position="226"/>
        <end position="246"/>
    </location>
</feature>
<feature type="transmembrane region" description="Helical" evidence="1">
    <location>
        <begin position="256"/>
        <end position="276"/>
    </location>
</feature>
<feature type="transmembrane region" description="Helical" evidence="1">
    <location>
        <begin position="286"/>
        <end position="306"/>
    </location>
</feature>
<feature type="transmembrane region" description="Helical" evidence="1">
    <location>
        <begin position="312"/>
        <end position="332"/>
    </location>
</feature>
<feature type="transmembrane region" description="Helical" evidence="1">
    <location>
        <begin position="353"/>
        <end position="373"/>
    </location>
</feature>
<feature type="transmembrane region" description="Helical" evidence="1">
    <location>
        <begin position="378"/>
        <end position="398"/>
    </location>
</feature>
<keyword id="KW-0046">Antibiotic resistance</keyword>
<keyword id="KW-1003">Cell membrane</keyword>
<keyword id="KW-0472">Membrane</keyword>
<keyword id="KW-1185">Reference proteome</keyword>
<keyword id="KW-0812">Transmembrane</keyword>
<keyword id="KW-1133">Transmembrane helix</keyword>
<keyword id="KW-0813">Transport</keyword>
<gene>
    <name type="ordered locus">Rv0191</name>
</gene>
<sequence>MTAPTGTSATTTRPWTPRIATQLSVLACAAFIYVTAEILPVGALSAIARNLRVSVVLVGTLLSWYALVAAVTTVPLVRWTAHWPRRRALVVSLVCLTVSQLVSALAPNFAVLAAGRVLCAVTHGLLWAVIAPIATRLVPPSHAGRATTSIYIGTSLALVVGSPLTAAMSLMWGWRLAAVCVTGAAAAVALAARLALPEMVLRADQLEHVGRRARHHRNPRLVKVSVLTMIAVTGHFVSYTYIVVIIRDVVGVRGPNLAWLLAAYGVAGLVSVPLVARPLDRWPKGAVIVGMTGLTAAFTLLTALAFGERHTAATALLGTGAIVLWGALATAVSPMLQSAAMRSGGDDPDGASGLYVTAFQIGIMAGALLGGLLYERSLAMMLTASAGLMGVALFGMTVSQHLFENPTLSPGDG</sequence>
<dbReference type="EMBL" id="AL123456">
    <property type="protein sequence ID" value="CCP42918.1"/>
    <property type="molecule type" value="Genomic_DNA"/>
</dbReference>
<dbReference type="PIR" id="B70907">
    <property type="entry name" value="B70907"/>
</dbReference>
<dbReference type="RefSeq" id="NP_214705.1">
    <property type="nucleotide sequence ID" value="NC_000962.3"/>
</dbReference>
<dbReference type="RefSeq" id="WP_003401149.1">
    <property type="nucleotide sequence ID" value="NZ_NVQJ01000001.1"/>
</dbReference>
<dbReference type="SMR" id="P9WJX7"/>
<dbReference type="FunCoup" id="P9WJX7">
    <property type="interactions" value="1"/>
</dbReference>
<dbReference type="STRING" id="83332.Rv0191"/>
<dbReference type="PaxDb" id="83332-Rv0191"/>
<dbReference type="DNASU" id="886770"/>
<dbReference type="GeneID" id="886770"/>
<dbReference type="KEGG" id="mtu:Rv0191"/>
<dbReference type="KEGG" id="mtv:RVBD_0191"/>
<dbReference type="TubercuList" id="Rv0191"/>
<dbReference type="eggNOG" id="COG2814">
    <property type="taxonomic scope" value="Bacteria"/>
</dbReference>
<dbReference type="InParanoid" id="P9WJX7"/>
<dbReference type="OrthoDB" id="4427197at2"/>
<dbReference type="PhylomeDB" id="P9WJX7"/>
<dbReference type="Proteomes" id="UP000001584">
    <property type="component" value="Chromosome"/>
</dbReference>
<dbReference type="GO" id="GO:0005886">
    <property type="term" value="C:plasma membrane"/>
    <property type="evidence" value="ECO:0000318"/>
    <property type="project" value="GO_Central"/>
</dbReference>
<dbReference type="GO" id="GO:0022857">
    <property type="term" value="F:transmembrane transporter activity"/>
    <property type="evidence" value="ECO:0000318"/>
    <property type="project" value="GO_Central"/>
</dbReference>
<dbReference type="GO" id="GO:0046677">
    <property type="term" value="P:response to antibiotic"/>
    <property type="evidence" value="ECO:0007669"/>
    <property type="project" value="UniProtKB-KW"/>
</dbReference>
<dbReference type="GO" id="GO:0055085">
    <property type="term" value="P:transmembrane transport"/>
    <property type="evidence" value="ECO:0000318"/>
    <property type="project" value="GO_Central"/>
</dbReference>
<dbReference type="CDD" id="cd17324">
    <property type="entry name" value="MFS_NepI_like"/>
    <property type="match status" value="1"/>
</dbReference>
<dbReference type="Gene3D" id="1.20.1250.20">
    <property type="entry name" value="MFS general substrate transporter like domains"/>
    <property type="match status" value="2"/>
</dbReference>
<dbReference type="InterPro" id="IPR011701">
    <property type="entry name" value="MFS"/>
</dbReference>
<dbReference type="InterPro" id="IPR020846">
    <property type="entry name" value="MFS_dom"/>
</dbReference>
<dbReference type="InterPro" id="IPR050189">
    <property type="entry name" value="MFS_Efflux_Transporters"/>
</dbReference>
<dbReference type="InterPro" id="IPR036259">
    <property type="entry name" value="MFS_trans_sf"/>
</dbReference>
<dbReference type="PANTHER" id="PTHR43124:SF3">
    <property type="entry name" value="CHLORAMPHENICOL EFFLUX PUMP RV0191"/>
    <property type="match status" value="1"/>
</dbReference>
<dbReference type="PANTHER" id="PTHR43124">
    <property type="entry name" value="PURINE EFFLUX PUMP PBUE"/>
    <property type="match status" value="1"/>
</dbReference>
<dbReference type="Pfam" id="PF07690">
    <property type="entry name" value="MFS_1"/>
    <property type="match status" value="1"/>
</dbReference>
<dbReference type="SUPFAM" id="SSF103473">
    <property type="entry name" value="MFS general substrate transporter"/>
    <property type="match status" value="1"/>
</dbReference>
<dbReference type="PROSITE" id="PS50850">
    <property type="entry name" value="MFS"/>
    <property type="match status" value="1"/>
</dbReference>
<name>CHLEP_MYCTU</name>
<reference key="1">
    <citation type="journal article" date="1998" name="Nature">
        <title>Deciphering the biology of Mycobacterium tuberculosis from the complete genome sequence.</title>
        <authorList>
            <person name="Cole S.T."/>
            <person name="Brosch R."/>
            <person name="Parkhill J."/>
            <person name="Garnier T."/>
            <person name="Churcher C.M."/>
            <person name="Harris D.E."/>
            <person name="Gordon S.V."/>
            <person name="Eiglmeier K."/>
            <person name="Gas S."/>
            <person name="Barry C.E. III"/>
            <person name="Tekaia F."/>
            <person name="Badcock K."/>
            <person name="Basham D."/>
            <person name="Brown D."/>
            <person name="Chillingworth T."/>
            <person name="Connor R."/>
            <person name="Davies R.M."/>
            <person name="Devlin K."/>
            <person name="Feltwell T."/>
            <person name="Gentles S."/>
            <person name="Hamlin N."/>
            <person name="Holroyd S."/>
            <person name="Hornsby T."/>
            <person name="Jagels K."/>
            <person name="Krogh A."/>
            <person name="McLean J."/>
            <person name="Moule S."/>
            <person name="Murphy L.D."/>
            <person name="Oliver S."/>
            <person name="Osborne J."/>
            <person name="Quail M.A."/>
            <person name="Rajandream M.A."/>
            <person name="Rogers J."/>
            <person name="Rutter S."/>
            <person name="Seeger K."/>
            <person name="Skelton S."/>
            <person name="Squares S."/>
            <person name="Squares R."/>
            <person name="Sulston J.E."/>
            <person name="Taylor K."/>
            <person name="Whitehead S."/>
            <person name="Barrell B.G."/>
        </authorList>
    </citation>
    <scope>NUCLEOTIDE SEQUENCE [LARGE SCALE GENOMIC DNA]</scope>
    <source>
        <strain>ATCC 25618 / H37Rv</strain>
    </source>
</reference>
<reference key="2">
    <citation type="journal article" date="2017" name="Antimicrob. Agents Chemother.">
        <title>Identification of novel efflux proteins Rv0191, Rv3756c, Rv3008, and Rv1667c involved in pyrazinamide resistance in Mycobacterium tuberculosis.</title>
        <authorList>
            <person name="Zhang Y."/>
            <person name="Zhang J."/>
            <person name="Cui P."/>
            <person name="Zhang Y."/>
            <person name="Zhang W."/>
        </authorList>
    </citation>
    <scope>FUNCTION</scope>
    <scope>ACTIVITY REGULATION</scope>
    <source>
        <strain>H37Ra</strain>
    </source>
</reference>
<reference key="3">
    <citation type="journal article" date="2019" name="Arch. Biochem. Biophys.">
        <title>Mycobacterium tuberculosis Rv0191 is an efflux pump of major facilitator superfamily transporter regulated by Rv1353c.</title>
        <authorList>
            <person name="Li X."/>
            <person name="Li P."/>
            <person name="Ruan C."/>
            <person name="Xie L.X."/>
            <person name="Gu Y."/>
            <person name="Li J."/>
            <person name="Yi Q."/>
            <person name="Lv X."/>
            <person name="Xie J."/>
        </authorList>
    </citation>
    <scope>FUNCTION</scope>
    <scope>ACTIVITY REGULATION</scope>
    <scope>INDUCTION</scope>
</reference>
<protein>
    <recommendedName>
        <fullName evidence="4">Chloramphenicol efflux pump Rv0191</fullName>
    </recommendedName>
</protein>
<proteinExistence type="evidence at transcript level"/>